<protein>
    <recommendedName>
        <fullName>DNA repair protein rad-50</fullName>
        <ecNumber evidence="3">3.6.-.-</ecNumber>
    </recommendedName>
</protein>
<keyword id="KW-0067">ATP-binding</keyword>
<keyword id="KW-0131">Cell cycle</keyword>
<keyword id="KW-0158">Chromosome</keyword>
<keyword id="KW-0175">Coiled coil</keyword>
<keyword id="KW-0227">DNA damage</keyword>
<keyword id="KW-0234">DNA repair</keyword>
<keyword id="KW-0378">Hydrolase</keyword>
<keyword id="KW-0460">Magnesium</keyword>
<keyword id="KW-0469">Meiosis</keyword>
<keyword id="KW-0479">Metal-binding</keyword>
<keyword id="KW-0547">Nucleotide-binding</keyword>
<keyword id="KW-0539">Nucleus</keyword>
<keyword id="KW-1185">Reference proteome</keyword>
<keyword id="KW-0862">Zinc</keyword>
<dbReference type="EC" id="3.6.-.-" evidence="3"/>
<dbReference type="EMBL" id="Z75312">
    <property type="protein sequence ID" value="CAA99730.1"/>
    <property type="molecule type" value="mRNA"/>
</dbReference>
<dbReference type="EMBL" id="Z78200">
    <property type="protein sequence ID" value="CAB01581.1"/>
    <property type="molecule type" value="Genomic_DNA"/>
</dbReference>
<dbReference type="PIR" id="T24480">
    <property type="entry name" value="T24480"/>
</dbReference>
<dbReference type="RefSeq" id="NP_506070.1">
    <property type="nucleotide sequence ID" value="NM_073669.9"/>
</dbReference>
<dbReference type="SMR" id="O44199"/>
<dbReference type="BioGRID" id="44701">
    <property type="interactions" value="4"/>
</dbReference>
<dbReference type="FunCoup" id="O44199">
    <property type="interactions" value="2808"/>
</dbReference>
<dbReference type="IntAct" id="O44199">
    <property type="interactions" value="1"/>
</dbReference>
<dbReference type="MINT" id="O44199"/>
<dbReference type="STRING" id="6239.T04H1.4b.2"/>
<dbReference type="PaxDb" id="6239-T04H1.4b.1"/>
<dbReference type="EnsemblMetazoa" id="T04H1.4a.1">
    <property type="protein sequence ID" value="T04H1.4a.1"/>
    <property type="gene ID" value="WBGene00004296"/>
</dbReference>
<dbReference type="GeneID" id="179678"/>
<dbReference type="KEGG" id="cel:CELE_T04H1.4"/>
<dbReference type="UCSC" id="T04H1.4b.1">
    <property type="organism name" value="c. elegans"/>
</dbReference>
<dbReference type="AGR" id="WB:WBGene00004296"/>
<dbReference type="CTD" id="179678"/>
<dbReference type="WormBase" id="T04H1.4a">
    <property type="protein sequence ID" value="CE21149"/>
    <property type="gene ID" value="WBGene00004296"/>
    <property type="gene designation" value="rad-50"/>
</dbReference>
<dbReference type="eggNOG" id="KOG0962">
    <property type="taxonomic scope" value="Eukaryota"/>
</dbReference>
<dbReference type="GeneTree" id="ENSGT00390000018781"/>
<dbReference type="HOGENOM" id="CLU_006184_0_0_1"/>
<dbReference type="InParanoid" id="O44199"/>
<dbReference type="OrthoDB" id="18797at2759"/>
<dbReference type="Reactome" id="R-CEL-5685939">
    <property type="pathway name" value="HDR through MMEJ (alt-NHEJ)"/>
</dbReference>
<dbReference type="Reactome" id="R-CEL-5693548">
    <property type="pathway name" value="Sensing of DNA Double Strand Breaks"/>
</dbReference>
<dbReference type="Reactome" id="R-CEL-5693607">
    <property type="pathway name" value="Processing of DNA double-strand break ends"/>
</dbReference>
<dbReference type="PRO" id="PR:O44199"/>
<dbReference type="Proteomes" id="UP000001940">
    <property type="component" value="Chromosome V"/>
</dbReference>
<dbReference type="Bgee" id="WBGene00004296">
    <property type="expression patterns" value="Expressed in adult organism and 4 other cell types or tissues"/>
</dbReference>
<dbReference type="ExpressionAtlas" id="O44199">
    <property type="expression patterns" value="baseline and differential"/>
</dbReference>
<dbReference type="GO" id="GO:0000794">
    <property type="term" value="C:condensed nuclear chromosome"/>
    <property type="evidence" value="ECO:0000318"/>
    <property type="project" value="GO_Central"/>
</dbReference>
<dbReference type="GO" id="GO:0030870">
    <property type="term" value="C:Mre11 complex"/>
    <property type="evidence" value="ECO:0000318"/>
    <property type="project" value="GO_Central"/>
</dbReference>
<dbReference type="GO" id="GO:0005524">
    <property type="term" value="F:ATP binding"/>
    <property type="evidence" value="ECO:0007669"/>
    <property type="project" value="UniProtKB-KW"/>
</dbReference>
<dbReference type="GO" id="GO:0016887">
    <property type="term" value="F:ATP hydrolysis activity"/>
    <property type="evidence" value="ECO:0007669"/>
    <property type="project" value="InterPro"/>
</dbReference>
<dbReference type="GO" id="GO:0003691">
    <property type="term" value="F:double-stranded telomeric DNA binding"/>
    <property type="evidence" value="ECO:0000318"/>
    <property type="project" value="GO_Central"/>
</dbReference>
<dbReference type="GO" id="GO:0051880">
    <property type="term" value="F:G-quadruplex DNA binding"/>
    <property type="evidence" value="ECO:0000318"/>
    <property type="project" value="GO_Central"/>
</dbReference>
<dbReference type="GO" id="GO:0046872">
    <property type="term" value="F:metal ion binding"/>
    <property type="evidence" value="ECO:0007669"/>
    <property type="project" value="UniProtKB-KW"/>
</dbReference>
<dbReference type="GO" id="GO:0043047">
    <property type="term" value="F:single-stranded telomeric DNA binding"/>
    <property type="evidence" value="ECO:0000318"/>
    <property type="project" value="GO_Central"/>
</dbReference>
<dbReference type="GO" id="GO:0070192">
    <property type="term" value="P:chromosome organization involved in meiotic cell cycle"/>
    <property type="evidence" value="ECO:0000318"/>
    <property type="project" value="GO_Central"/>
</dbReference>
<dbReference type="GO" id="GO:0006302">
    <property type="term" value="P:double-strand break repair"/>
    <property type="evidence" value="ECO:0000318"/>
    <property type="project" value="GO_Central"/>
</dbReference>
<dbReference type="GO" id="GO:0000722">
    <property type="term" value="P:telomere maintenance via recombination"/>
    <property type="evidence" value="ECO:0000318"/>
    <property type="project" value="GO_Central"/>
</dbReference>
<dbReference type="GO" id="GO:0007004">
    <property type="term" value="P:telomere maintenance via telomerase"/>
    <property type="evidence" value="ECO:0000318"/>
    <property type="project" value="GO_Central"/>
</dbReference>
<dbReference type="FunFam" id="3.40.50.300:FF:003985">
    <property type="entry name" value="DNA repair protein rad-50"/>
    <property type="match status" value="1"/>
</dbReference>
<dbReference type="Gene3D" id="3.40.50.300">
    <property type="entry name" value="P-loop containing nucleotide triphosphate hydrolases"/>
    <property type="match status" value="2"/>
</dbReference>
<dbReference type="InterPro" id="IPR027417">
    <property type="entry name" value="P-loop_NTPase"/>
</dbReference>
<dbReference type="InterPro" id="IPR038729">
    <property type="entry name" value="Rad50/SbcC_AAA"/>
</dbReference>
<dbReference type="InterPro" id="IPR004584">
    <property type="entry name" value="Rad50_eukaryotes"/>
</dbReference>
<dbReference type="InterPro" id="IPR013134">
    <property type="entry name" value="Zn_hook_RAD50"/>
</dbReference>
<dbReference type="NCBIfam" id="TIGR00606">
    <property type="entry name" value="rad50"/>
    <property type="match status" value="1"/>
</dbReference>
<dbReference type="PANTHER" id="PTHR18867:SF12">
    <property type="entry name" value="DNA REPAIR PROTEIN RAD50"/>
    <property type="match status" value="1"/>
</dbReference>
<dbReference type="PANTHER" id="PTHR18867">
    <property type="entry name" value="RAD50"/>
    <property type="match status" value="1"/>
</dbReference>
<dbReference type="Pfam" id="PF13476">
    <property type="entry name" value="AAA_23"/>
    <property type="match status" value="1"/>
</dbReference>
<dbReference type="Pfam" id="PF04423">
    <property type="entry name" value="Rad50_zn_hook"/>
    <property type="match status" value="1"/>
</dbReference>
<dbReference type="Pfam" id="PF13558">
    <property type="entry name" value="SbcC_Walker_B"/>
    <property type="match status" value="1"/>
</dbReference>
<dbReference type="SUPFAM" id="SSF52540">
    <property type="entry name" value="P-loop containing nucleoside triphosphate hydrolases"/>
    <property type="match status" value="1"/>
</dbReference>
<dbReference type="SUPFAM" id="SSF75712">
    <property type="entry name" value="Rad50 coiled-coil Zn hook"/>
    <property type="match status" value="1"/>
</dbReference>
<dbReference type="PROSITE" id="PS51131">
    <property type="entry name" value="ZN_HOOK"/>
    <property type="match status" value="1"/>
</dbReference>
<comment type="function">
    <text evidence="1 3 6 7">Component of the MRN complex, which plays a central role in double-strand break (DSB) repair, DNA recombination, maintenance of telomere integrity and meiosis (PubMed:12242227, Ref.3). The MRN complex is involved in the repair of DNA double-strand breaks (DSBs) via homologous recombination (HR), an error-free mechanism which primarily occurs during S and G2 phases (By similarity). The complex (1) mediates the end resection of damaged DNA, which generates proper single-stranded DNA, a key initial steps in HR, and is (2) required for the recruitment of other repair factors and efficient activation of ATM and ATR upon DNA damage (By similarity). The MRN complex possesses single-strand endonuclease activity and double-strand-specific 3'-5' exonuclease activity, which are provided by mre-11, to initiate end resection, which is required for single-strand invasion and recombination (By similarity). Within the complex, rad-50 is both required to bind DNA ends and hold them in close proximity and regulate the activity of mre-11 (By similarity). Rad-50 provides an ATP-dependent control of mre-11 by positioning DNA ends into the mre-11 active site: ATP-binding induces a large structural change from an open form with accessible mre-11 nuclease sites into a closed form (By similarity).</text>
</comment>
<comment type="catalytic activity">
    <reaction evidence="1">
        <text>ATP + H2O = ADP + phosphate + H(+)</text>
        <dbReference type="Rhea" id="RHEA:13065"/>
        <dbReference type="ChEBI" id="CHEBI:15377"/>
        <dbReference type="ChEBI" id="CHEBI:15378"/>
        <dbReference type="ChEBI" id="CHEBI:30616"/>
        <dbReference type="ChEBI" id="CHEBI:43474"/>
        <dbReference type="ChEBI" id="CHEBI:456216"/>
    </reaction>
</comment>
<comment type="cofactor">
    <cofactor evidence="1">
        <name>Zn(2+)</name>
        <dbReference type="ChEBI" id="CHEBI:29105"/>
    </cofactor>
    <text evidence="1">Binds 1 zinc ion per homodimer.</text>
</comment>
<comment type="subunit">
    <text evidence="1">Component of the MRN complex composed of two heterodimers rad-50 and mre-11 associated with a single nbs-1.</text>
</comment>
<comment type="subcellular location">
    <subcellularLocation>
        <location evidence="3">Nucleus</location>
    </subcellularLocation>
    <subcellularLocation>
        <location evidence="3">Chromosome</location>
    </subcellularLocation>
    <text evidence="3">Localizes to DNA double-strand breaks (DSBs).</text>
</comment>
<comment type="domain">
    <text evidence="2">The zinc-hook, which separates the large intramolecular coiled coil regions, contains 2 Cys residues that coordinate one molecule of zinc with the help of the 2 Cys residues of the zinc-hook of another RAD50 molecule, thereby forming a V-shaped homodimer. The two heads of the homodimer, which constitute the ATP-binding domain, interact with the MRE11 homodimer.</text>
</comment>
<comment type="similarity">
    <text evidence="8">Belongs to the SMC family. RAD50 subfamily.</text>
</comment>
<reference key="1">
    <citation type="submission" date="1996-07" db="EMBL/GenBank/DDBJ databases">
        <authorList>
            <person name="Offenberg H.H."/>
            <person name="Heyting C."/>
        </authorList>
    </citation>
    <scope>NUCLEOTIDE SEQUENCE [MRNA]</scope>
    <source>
        <strain>CB1489</strain>
    </source>
</reference>
<reference key="2">
    <citation type="journal article" date="1998" name="Science">
        <title>Genome sequence of the nematode C. elegans: a platform for investigating biology.</title>
        <authorList>
            <consortium name="The C. elegans sequencing consortium"/>
        </authorList>
    </citation>
    <scope>NUCLEOTIDE SEQUENCE [LARGE SCALE GENOMIC DNA]</scope>
    <source>
        <strain>Bristol N2</strain>
    </source>
</reference>
<reference key="3">
    <citation type="book" date="2001" name="Proceedings of the 13th international C. elegans meeting">
        <title>Identifying new genes that function in meiotic DNA repair and double-strand break initiation.</title>
        <authorList>
            <person name="Chin G."/>
            <person name="Villeneuve A."/>
        </authorList>
    </citation>
    <scope>FUNCTION</scope>
</reference>
<reference key="4">
    <citation type="journal article" date="2002" name="Genetics">
        <title>A targeted RNAi screen for genes involved in chromosome morphogenesis and nuclear organization in the Caenorhabditis elegans germline.</title>
        <authorList>
            <person name="Colaiacovo M.P."/>
            <person name="Stanfield G.M."/>
            <person name="Reddy K.C."/>
            <person name="Reinke V."/>
            <person name="Kim S.K."/>
            <person name="Villeneuve A.M."/>
        </authorList>
    </citation>
    <scope>FUNCTION</scope>
</reference>
<proteinExistence type="evidence at transcript level"/>
<sequence length="1298" mass="150396">MAKFLRLHIRGIRSVGDEDHDVHKIDFLSPCTLISGPNGTGKTTTIEALNFVTTGQMPTQKKQNFIHSTDVARKTRVDASVTLEFIDVKGRECTAVRRLVVTSGTKAAALAEEHTLAIKYPDGTVNTLSSKVCDFNTALLKHLGVPRAVFKYVIFCHQEDSTWPLSEPKELKKRFDDIFQLTKFVKAQERMKKIVLDFKKEMQTHEMSKQLYETHVRDKLVARQNQEECERKISKRKEETDELKERKANGQKKIEEMRTSIHELEDTLTSFKKTELERQNLKKQLSLIRVEPYFGTEEELKREIEEFRGSEGRSYGEERARIQKKIGKNNQERQELSQKKTEFENRISSLKAEVIHCQSLKYDLERLENQLRSELDLEHDADIDIEIDNAITLKIRGMSDKARMIAKNCAELQSNLRTAQEAATKIEVEMKTLQNEKVKLEKEVEQLKFKIKQGQNATAGMKDLLKKEEALRKSLADLPLLDENALTECKLKREKYLKQLDILKKKCAEAEKNAEKDREKESLKQTLSIARKKMTAYQRIYDNNWQGLIGQAPDFPWTPILSKTFHKLRNDKKIMEEDLRDVQLNVQKLETMQHQYRKQEESLTAQELKLSENIFEACSCEAEEVSEKLENLRKRLKKARKDLAPLSAKSNLYDSYIEESKSSGCCPLCDRDFKTKKEINEFSKKLENMTLSFPTEQEELEKLVSKLEKEEIIIVKAEGQANELQRIVKELKEVREKNRKLSTEMAEEKSNLSKNEKQLETVNAKLKLAEDLQTDVGVIQQLYEQTEENEKRYEQLVSESDSSDGLSYTELRKKVEDKDEEYRKIVQEGEELQKCSEERNKLQSKLNELGTHRVSLGEAAAQAGAFAEQLETKIKEIQECITAISQKRNEDLPDAQFKKDDLTRNVSSKEEEKKKAEMEVQMMKKELDQKIFHRKSLFKKVQEGGLCERQLMDKENNIATLNASLEENQQRQKRFEEDLRSFDSSHQRESILKDQLTRMIIENKIKELKRTLATFDGQINEDRITEQKQAYNKLQNELRLIGNEEVKIYTQMQEYEKQKKIAEAKLSTKECQNAESNYRDAIIELAITKESISDLTKYRNCLDASLIQFHSEKMGRVNGIIDDLWRKVYNSTDITTIRIRSDATSETSSKKVAYEYNVMMVHETGTEVEMRGRCSAGQKMLASLLIRIALAEVFGGSCSMIALDEPTTNLDESKVEGMAIVLADIIAERRGFDENGKLRGRDMQMVVITHDERLVNRITISCRPEYIYCLGKDEHGISFLSKRYPDGTVKRVNTKRRF</sequence>
<feature type="chain" id="PRO_0000138644" description="DNA repair protein rad-50">
    <location>
        <begin position="1"/>
        <end position="1298"/>
    </location>
</feature>
<feature type="domain" description="Zinc-hook" evidence="5">
    <location>
        <begin position="622"/>
        <end position="719"/>
    </location>
</feature>
<feature type="coiled-coil region" evidence="4">
    <location>
        <begin position="222"/>
        <end position="291"/>
    </location>
</feature>
<feature type="coiled-coil region" evidence="4">
    <location>
        <begin position="317"/>
        <end position="598"/>
    </location>
</feature>
<feature type="coiled-coil region" evidence="4">
    <location>
        <begin position="622"/>
        <end position="660"/>
    </location>
</feature>
<feature type="coiled-coil region" evidence="4">
    <location>
        <begin position="691"/>
        <end position="719"/>
    </location>
</feature>
<feature type="coiled-coil region" evidence="4">
    <location>
        <begin position="754"/>
        <end position="1092"/>
    </location>
</feature>
<feature type="binding site" evidence="1">
    <location>
        <position position="13"/>
    </location>
    <ligand>
        <name>ATP</name>
        <dbReference type="ChEBI" id="CHEBI:30616"/>
    </ligand>
</feature>
<feature type="binding site" evidence="1">
    <location>
        <position position="38"/>
    </location>
    <ligand>
        <name>ATP</name>
        <dbReference type="ChEBI" id="CHEBI:30616"/>
    </ligand>
</feature>
<feature type="binding site" evidence="1">
    <location>
        <position position="39"/>
    </location>
    <ligand>
        <name>ATP</name>
        <dbReference type="ChEBI" id="CHEBI:30616"/>
    </ligand>
</feature>
<feature type="binding site" evidence="1">
    <location>
        <position position="41"/>
    </location>
    <ligand>
        <name>ATP</name>
        <dbReference type="ChEBI" id="CHEBI:30616"/>
    </ligand>
</feature>
<feature type="binding site" evidence="1">
    <location>
        <position position="42"/>
    </location>
    <ligand>
        <name>ATP</name>
        <dbReference type="ChEBI" id="CHEBI:30616"/>
    </ligand>
</feature>
<feature type="binding site" evidence="1">
    <location>
        <position position="43"/>
    </location>
    <ligand>
        <name>ATP</name>
        <dbReference type="ChEBI" id="CHEBI:30616"/>
    </ligand>
</feature>
<feature type="binding site" evidence="1">
    <location>
        <position position="43"/>
    </location>
    <ligand>
        <name>Mg(2+)</name>
        <dbReference type="ChEBI" id="CHEBI:18420"/>
    </ligand>
</feature>
<feature type="binding site" evidence="1">
    <location>
        <position position="44"/>
    </location>
    <ligand>
        <name>ATP</name>
        <dbReference type="ChEBI" id="CHEBI:30616"/>
    </ligand>
</feature>
<feature type="binding site" evidence="1">
    <location>
        <position position="66"/>
    </location>
    <ligand>
        <name>ATP</name>
        <dbReference type="ChEBI" id="CHEBI:30616"/>
    </ligand>
</feature>
<feature type="binding site" evidence="1">
    <location>
        <position position="158"/>
    </location>
    <ligand>
        <name>ATP</name>
        <dbReference type="ChEBI" id="CHEBI:30616"/>
    </ligand>
</feature>
<feature type="binding site" evidence="1">
    <location>
        <position position="158"/>
    </location>
    <ligand>
        <name>Mg(2+)</name>
        <dbReference type="ChEBI" id="CHEBI:18420"/>
    </ligand>
</feature>
<feature type="binding site" evidence="5">
    <location>
        <position position="666"/>
    </location>
    <ligand>
        <name>Zn(2+)</name>
        <dbReference type="ChEBI" id="CHEBI:29105"/>
    </ligand>
</feature>
<feature type="binding site" evidence="5">
    <location>
        <position position="669"/>
    </location>
    <ligand>
        <name>Zn(2+)</name>
        <dbReference type="ChEBI" id="CHEBI:29105"/>
    </ligand>
</feature>
<name>RAD50_CAEEL</name>
<gene>
    <name type="primary">rad-50</name>
    <name type="ORF">T04H1.4</name>
</gene>
<evidence type="ECO:0000250" key="1">
    <source>
        <dbReference type="UniProtKB" id="G0SHW7"/>
    </source>
</evidence>
<evidence type="ECO:0000250" key="2">
    <source>
        <dbReference type="UniProtKB" id="P58301"/>
    </source>
</evidence>
<evidence type="ECO:0000250" key="3">
    <source>
        <dbReference type="UniProtKB" id="Q92878"/>
    </source>
</evidence>
<evidence type="ECO:0000255" key="4"/>
<evidence type="ECO:0000255" key="5">
    <source>
        <dbReference type="PROSITE-ProRule" id="PRU00471"/>
    </source>
</evidence>
<evidence type="ECO:0000269" key="6">
    <source>
    </source>
</evidence>
<evidence type="ECO:0000269" key="7">
    <source ref="3"/>
</evidence>
<evidence type="ECO:0000305" key="8"/>
<accession>O44199</accession>
<accession>Q22177</accession>
<organism>
    <name type="scientific">Caenorhabditis elegans</name>
    <dbReference type="NCBI Taxonomy" id="6239"/>
    <lineage>
        <taxon>Eukaryota</taxon>
        <taxon>Metazoa</taxon>
        <taxon>Ecdysozoa</taxon>
        <taxon>Nematoda</taxon>
        <taxon>Chromadorea</taxon>
        <taxon>Rhabditida</taxon>
        <taxon>Rhabditina</taxon>
        <taxon>Rhabditomorpha</taxon>
        <taxon>Rhabditoidea</taxon>
        <taxon>Rhabditidae</taxon>
        <taxon>Peloderinae</taxon>
        <taxon>Caenorhabditis</taxon>
    </lineage>
</organism>